<comment type="function">
    <text evidence="1 8">Autoreceptor for octopamine, which is a neurotransmitter, neurohormone, and neuromodulator in invertebrates (By similarity). Probably also acts as a receptor for tyramine during ecdysone biosynthesis (PubMed:25605909). Required for the biosynthesis of the steroid hormone ecdysone which is necessary for metamorphosis (PubMed:25605909). Involved in activation of prothoracicotropic hormone and insulin-like peptide signaling which is required for the expression of ecdysone biosynthetic genes (PubMed:25605909).</text>
</comment>
<comment type="subcellular location">
    <subcellularLocation>
        <location evidence="10">Cell membrane</location>
        <topology evidence="10">Multi-pass membrane protein</topology>
    </subcellularLocation>
</comment>
<comment type="alternative products">
    <event type="alternative splicing"/>
    <isoform>
        <id>Q4LBB6-6</id>
        <name>F</name>
        <sequence type="displayed"/>
    </isoform>
    <isoform>
        <id>Q4LBB6-4</id>
        <name evidence="6">D</name>
        <name evidence="9">variant A</name>
        <sequence type="described" ref="VSP_041777"/>
    </isoform>
    <isoform>
        <id>Q4LBB6-2</id>
        <name evidence="6">A</name>
        <name evidence="9">variant D</name>
        <sequence type="described" ref="VSP_051835"/>
    </isoform>
    <isoform>
        <id>Q4LBB6-1</id>
        <name evidence="6">B</name>
        <name evidence="9">variant C</name>
        <sequence type="described" ref="VSP_041779 VSP_041782"/>
    </isoform>
    <isoform>
        <id>Q4LBB6-3</id>
        <name evidence="6">C</name>
        <name evidence="9">variant B</name>
        <sequence type="described" ref="VSP_051837"/>
    </isoform>
    <isoform>
        <id>Q4LBB6-7</id>
        <name>G</name>
        <sequence type="described" ref="VSP_041783"/>
    </isoform>
    <isoform>
        <id>Q4LBB6-8</id>
        <name>J</name>
        <sequence type="described" ref="VSP_041778"/>
    </isoform>
    <isoform>
        <id>Q4LBB6-9</id>
        <name>H</name>
        <sequence type="described" ref="VSP_041780 VSP_041781"/>
    </isoform>
</comment>
<comment type="tissue specificity">
    <text evidence="7">In the adult, expressed in the inferior and superior protocerebrum, the posterior lateral protocerebrum, the deutocerebrum, the surface of the subesophageal ganglion, the lateral cell body region, the cortical layer of the ventral nerve cord and the optic lobe medulla of the central nervous system (CNS). Also expressed in the nurse cells and follicle cells of the egg chambers in the ovary at oogenic stages 1-10, and spermatogonia and spermatocytes in the testis. Expressed ubiquitously in the embryonic CNS. In larvae, expressed in the ventral cortical layer of the ventral nerve cord, the cortical layer of the brain lobes, salivary glands, midgut, imaginal disks and developing reproductive organs. Expressed in the larval prothoracic gland with weak expression in other regions of the ring gland.</text>
</comment>
<comment type="developmental stage">
    <text evidence="7">Levels peak during the late embryonic stages. Slight increase in expression at the mid-larval stage that decreases over the pupal stage and then slightly increases in the adult.</text>
</comment>
<comment type="disruption phenotype">
    <text evidence="8">RNAi-mediated knockdown in the prothoracic gland results in developmental arrest at the larval stage. This larval-prepual arrest can be rescued by supplementing larvae diet with 20-hydroxyecdysone (20E).</text>
</comment>
<comment type="similarity">
    <text evidence="3">Belongs to the G-protein coupled receptor 1 family.</text>
</comment>
<dbReference type="EMBL" id="AJ884591">
    <property type="protein sequence ID" value="CAI56424.1"/>
    <property type="molecule type" value="mRNA"/>
</dbReference>
<dbReference type="EMBL" id="AJ884592">
    <property type="protein sequence ID" value="CAI56425.1"/>
    <property type="molecule type" value="mRNA"/>
</dbReference>
<dbReference type="EMBL" id="AJ884593">
    <property type="protein sequence ID" value="CAI56426.1"/>
    <property type="molecule type" value="mRNA"/>
</dbReference>
<dbReference type="EMBL" id="AJ884594">
    <property type="protein sequence ID" value="CAI56427.1"/>
    <property type="molecule type" value="mRNA"/>
</dbReference>
<dbReference type="EMBL" id="AE014297">
    <property type="protein sequence ID" value="AAF54832.2"/>
    <property type="molecule type" value="Genomic_DNA"/>
</dbReference>
<dbReference type="EMBL" id="AE014297">
    <property type="protein sequence ID" value="ABC66171.2"/>
    <property type="molecule type" value="Genomic_DNA"/>
</dbReference>
<dbReference type="EMBL" id="AE014297">
    <property type="protein sequence ID" value="ABC66172.2"/>
    <property type="molecule type" value="Genomic_DNA"/>
</dbReference>
<dbReference type="EMBL" id="AE014297">
    <property type="protein sequence ID" value="ABC66173.2"/>
    <property type="molecule type" value="Genomic_DNA"/>
</dbReference>
<dbReference type="EMBL" id="BT029269">
    <property type="protein sequence ID" value="ABK30906.1"/>
    <property type="molecule type" value="mRNA"/>
</dbReference>
<dbReference type="RefSeq" id="NP_001034043.2">
    <molecule id="Q4LBB6-8"/>
    <property type="nucleotide sequence ID" value="NM_001038954.2"/>
</dbReference>
<dbReference type="RefSeq" id="NP_001034046.3">
    <molecule id="Q4LBB6-1"/>
    <property type="nucleotide sequence ID" value="NM_001038957.3"/>
</dbReference>
<dbReference type="RefSeq" id="NP_001034048.2">
    <molecule id="Q4LBB6-6"/>
    <property type="nucleotide sequence ID" value="NM_001038959.3"/>
</dbReference>
<dbReference type="RefSeq" id="NP_650210.2">
    <molecule id="Q4LBB6-7"/>
    <property type="nucleotide sequence ID" value="NM_141953.3"/>
</dbReference>
<dbReference type="SMR" id="Q4LBB6"/>
<dbReference type="FunCoup" id="Q4LBB6">
    <property type="interactions" value="174"/>
</dbReference>
<dbReference type="IntAct" id="Q4LBB6">
    <property type="interactions" value="3"/>
</dbReference>
<dbReference type="STRING" id="7227.FBpp0288773"/>
<dbReference type="GlyCosmos" id="Q4LBB6">
    <property type="glycosylation" value="4 sites, No reported glycans"/>
</dbReference>
<dbReference type="GlyGen" id="Q4LBB6">
    <property type="glycosylation" value="4 sites"/>
</dbReference>
<dbReference type="PaxDb" id="7227-FBpp0288773"/>
<dbReference type="EnsemblMetazoa" id="FBtr0290334">
    <molecule id="Q4LBB6-6"/>
    <property type="protein sequence ID" value="FBpp0288773"/>
    <property type="gene ID" value="FBgn0250910"/>
</dbReference>
<dbReference type="EnsemblMetazoa" id="FBtr0290335">
    <molecule id="Q4LBB6-7"/>
    <property type="protein sequence ID" value="FBpp0288774"/>
    <property type="gene ID" value="FBgn0250910"/>
</dbReference>
<dbReference type="EnsemblMetazoa" id="FBtr0301944">
    <molecule id="Q4LBB6-8"/>
    <property type="protein sequence ID" value="FBpp0291156"/>
    <property type="gene ID" value="FBgn0250910"/>
</dbReference>
<dbReference type="EnsemblMetazoa" id="FBtr0308597">
    <molecule id="Q4LBB6-1"/>
    <property type="protein sequence ID" value="FBpp0300821"/>
    <property type="gene ID" value="FBgn0250910"/>
</dbReference>
<dbReference type="GeneID" id="3885573"/>
<dbReference type="KEGG" id="dme:Dmel_CG42244"/>
<dbReference type="UCSC" id="CG42244-RB">
    <property type="organism name" value="d. melanogaster"/>
</dbReference>
<dbReference type="AGR" id="FB:FBgn0250910"/>
<dbReference type="CTD" id="3885573"/>
<dbReference type="FlyBase" id="FBgn0250910">
    <property type="gene designation" value="Octbeta3R"/>
</dbReference>
<dbReference type="VEuPathDB" id="VectorBase:FBgn0250910"/>
<dbReference type="eggNOG" id="KOG3656">
    <property type="taxonomic scope" value="Eukaryota"/>
</dbReference>
<dbReference type="GeneTree" id="ENSGT00940000171582"/>
<dbReference type="InParanoid" id="Q4LBB6"/>
<dbReference type="OMA" id="VHMGHAQ"/>
<dbReference type="OrthoDB" id="5957871at2759"/>
<dbReference type="PhylomeDB" id="Q4LBB6"/>
<dbReference type="Reactome" id="R-DME-390651">
    <property type="pathway name" value="Dopamine receptors"/>
</dbReference>
<dbReference type="Reactome" id="R-DME-390696">
    <property type="pathway name" value="Adrenoceptors"/>
</dbReference>
<dbReference type="Reactome" id="R-DME-418555">
    <property type="pathway name" value="G alpha (s) signalling events"/>
</dbReference>
<dbReference type="Reactome" id="R-DME-5689880">
    <property type="pathway name" value="Ub-specific processing proteases"/>
</dbReference>
<dbReference type="Reactome" id="R-DME-8856825">
    <property type="pathway name" value="Cargo recognition for clathrin-mediated endocytosis"/>
</dbReference>
<dbReference type="Reactome" id="R-DME-8856828">
    <property type="pathway name" value="Clathrin-mediated endocytosis"/>
</dbReference>
<dbReference type="BioGRID-ORCS" id="3885573">
    <property type="hits" value="0 hits in 1 CRISPR screen"/>
</dbReference>
<dbReference type="ChiTaRS" id="Octbeta3R">
    <property type="organism name" value="fly"/>
</dbReference>
<dbReference type="GenomeRNAi" id="3885573"/>
<dbReference type="PRO" id="PR:Q4LBB6"/>
<dbReference type="Proteomes" id="UP000000803">
    <property type="component" value="Chromosome 3R"/>
</dbReference>
<dbReference type="Bgee" id="FBgn0250910">
    <property type="expression patterns" value="Expressed in lamina monopolar neuron L1 (Drosophila) in insect head and 137 other cell types or tissues"/>
</dbReference>
<dbReference type="GO" id="GO:0016020">
    <property type="term" value="C:membrane"/>
    <property type="evidence" value="ECO:0000250"/>
    <property type="project" value="FlyBase"/>
</dbReference>
<dbReference type="GO" id="GO:0005886">
    <property type="term" value="C:plasma membrane"/>
    <property type="evidence" value="ECO:0000314"/>
    <property type="project" value="FlyBase"/>
</dbReference>
<dbReference type="GO" id="GO:0008227">
    <property type="term" value="F:G protein-coupled amine receptor activity"/>
    <property type="evidence" value="ECO:0000250"/>
    <property type="project" value="FlyBase"/>
</dbReference>
<dbReference type="GO" id="GO:0004989">
    <property type="term" value="F:octopamine receptor activity"/>
    <property type="evidence" value="ECO:0000314"/>
    <property type="project" value="FlyBase"/>
</dbReference>
<dbReference type="GO" id="GO:0071880">
    <property type="term" value="P:adenylate cyclase-activating adrenergic receptor signaling pathway"/>
    <property type="evidence" value="ECO:0000318"/>
    <property type="project" value="GO_Central"/>
</dbReference>
<dbReference type="GO" id="GO:0007189">
    <property type="term" value="P:adenylate cyclase-activating G protein-coupled receptor signaling pathway"/>
    <property type="evidence" value="ECO:0000314"/>
    <property type="project" value="FlyBase"/>
</dbReference>
<dbReference type="GO" id="GO:0007186">
    <property type="term" value="P:G protein-coupled receptor signaling pathway"/>
    <property type="evidence" value="ECO:0000314"/>
    <property type="project" value="FlyBase"/>
</dbReference>
<dbReference type="GO" id="GO:0043410">
    <property type="term" value="P:positive regulation of MAPK cascade"/>
    <property type="evidence" value="ECO:0000318"/>
    <property type="project" value="GO_Central"/>
</dbReference>
<dbReference type="CDD" id="cd15066">
    <property type="entry name" value="7tmA_DmOct-betaAR-like"/>
    <property type="match status" value="1"/>
</dbReference>
<dbReference type="FunFam" id="1.20.1070.10:FF:000321">
    <property type="entry name" value="Octopamine receptor beta-3R"/>
    <property type="match status" value="1"/>
</dbReference>
<dbReference type="FunFam" id="1.20.1070.10:FF:000851">
    <property type="entry name" value="Octopamine receptor beta-3R"/>
    <property type="match status" value="1"/>
</dbReference>
<dbReference type="Gene3D" id="1.20.1070.10">
    <property type="entry name" value="Rhodopsin 7-helix transmembrane proteins"/>
    <property type="match status" value="2"/>
</dbReference>
<dbReference type="InterPro" id="IPR000276">
    <property type="entry name" value="GPCR_Rhodpsn"/>
</dbReference>
<dbReference type="InterPro" id="IPR017452">
    <property type="entry name" value="GPCR_Rhodpsn_7TM"/>
</dbReference>
<dbReference type="PANTHER" id="PTHR24248">
    <property type="entry name" value="ADRENERGIC RECEPTOR-RELATED G-PROTEIN COUPLED RECEPTOR"/>
    <property type="match status" value="1"/>
</dbReference>
<dbReference type="PANTHER" id="PTHR24248:SF66">
    <property type="entry name" value="OCTOPAMINE RECEPTOR BETA-3R"/>
    <property type="match status" value="1"/>
</dbReference>
<dbReference type="Pfam" id="PF00001">
    <property type="entry name" value="7tm_1"/>
    <property type="match status" value="2"/>
</dbReference>
<dbReference type="PRINTS" id="PR00237">
    <property type="entry name" value="GPCRRHODOPSN"/>
</dbReference>
<dbReference type="SUPFAM" id="SSF81321">
    <property type="entry name" value="Family A G protein-coupled receptor-like"/>
    <property type="match status" value="2"/>
</dbReference>
<dbReference type="PROSITE" id="PS00237">
    <property type="entry name" value="G_PROTEIN_RECEP_F1_1"/>
    <property type="match status" value="1"/>
</dbReference>
<dbReference type="PROSITE" id="PS50262">
    <property type="entry name" value="G_PROTEIN_RECEP_F1_2"/>
    <property type="match status" value="2"/>
</dbReference>
<reference evidence="10 11" key="1">
    <citation type="journal article" date="2005" name="J. Neurochem.">
        <title>Identification and characterization of a novel family of Drosophila beta-adrenergic-like octopamine G-protein coupled receptors.</title>
        <authorList>
            <person name="Maqueira B."/>
            <person name="Chatwin H."/>
            <person name="Evans P.D."/>
        </authorList>
    </citation>
    <scope>NUCLEOTIDE SEQUENCE [MRNA] (ISOFORMS A; B; C AND D)</scope>
    <source>
        <tissue evidence="11">Head</tissue>
    </source>
</reference>
<reference key="2">
    <citation type="journal article" date="2000" name="Science">
        <title>The genome sequence of Drosophila melanogaster.</title>
        <authorList>
            <person name="Adams M.D."/>
            <person name="Celniker S.E."/>
            <person name="Holt R.A."/>
            <person name="Evans C.A."/>
            <person name="Gocayne J.D."/>
            <person name="Amanatides P.G."/>
            <person name="Scherer S.E."/>
            <person name="Li P.W."/>
            <person name="Hoskins R.A."/>
            <person name="Galle R.F."/>
            <person name="George R.A."/>
            <person name="Lewis S.E."/>
            <person name="Richards S."/>
            <person name="Ashburner M."/>
            <person name="Henderson S.N."/>
            <person name="Sutton G.G."/>
            <person name="Wortman J.R."/>
            <person name="Yandell M.D."/>
            <person name="Zhang Q."/>
            <person name="Chen L.X."/>
            <person name="Brandon R.C."/>
            <person name="Rogers Y.-H.C."/>
            <person name="Blazej R.G."/>
            <person name="Champe M."/>
            <person name="Pfeiffer B.D."/>
            <person name="Wan K.H."/>
            <person name="Doyle C."/>
            <person name="Baxter E.G."/>
            <person name="Helt G."/>
            <person name="Nelson C.R."/>
            <person name="Miklos G.L.G."/>
            <person name="Abril J.F."/>
            <person name="Agbayani A."/>
            <person name="An H.-J."/>
            <person name="Andrews-Pfannkoch C."/>
            <person name="Baldwin D."/>
            <person name="Ballew R.M."/>
            <person name="Basu A."/>
            <person name="Baxendale J."/>
            <person name="Bayraktaroglu L."/>
            <person name="Beasley E.M."/>
            <person name="Beeson K.Y."/>
            <person name="Benos P.V."/>
            <person name="Berman B.P."/>
            <person name="Bhandari D."/>
            <person name="Bolshakov S."/>
            <person name="Borkova D."/>
            <person name="Botchan M.R."/>
            <person name="Bouck J."/>
            <person name="Brokstein P."/>
            <person name="Brottier P."/>
            <person name="Burtis K.C."/>
            <person name="Busam D.A."/>
            <person name="Butler H."/>
            <person name="Cadieu E."/>
            <person name="Center A."/>
            <person name="Chandra I."/>
            <person name="Cherry J.M."/>
            <person name="Cawley S."/>
            <person name="Dahlke C."/>
            <person name="Davenport L.B."/>
            <person name="Davies P."/>
            <person name="de Pablos B."/>
            <person name="Delcher A."/>
            <person name="Deng Z."/>
            <person name="Mays A.D."/>
            <person name="Dew I."/>
            <person name="Dietz S.M."/>
            <person name="Dodson K."/>
            <person name="Doup L.E."/>
            <person name="Downes M."/>
            <person name="Dugan-Rocha S."/>
            <person name="Dunkov B.C."/>
            <person name="Dunn P."/>
            <person name="Durbin K.J."/>
            <person name="Evangelista C.C."/>
            <person name="Ferraz C."/>
            <person name="Ferriera S."/>
            <person name="Fleischmann W."/>
            <person name="Fosler C."/>
            <person name="Gabrielian A.E."/>
            <person name="Garg N.S."/>
            <person name="Gelbart W.M."/>
            <person name="Glasser K."/>
            <person name="Glodek A."/>
            <person name="Gong F."/>
            <person name="Gorrell J.H."/>
            <person name="Gu Z."/>
            <person name="Guan P."/>
            <person name="Harris M."/>
            <person name="Harris N.L."/>
            <person name="Harvey D.A."/>
            <person name="Heiman T.J."/>
            <person name="Hernandez J.R."/>
            <person name="Houck J."/>
            <person name="Hostin D."/>
            <person name="Houston K.A."/>
            <person name="Howland T.J."/>
            <person name="Wei M.-H."/>
            <person name="Ibegwam C."/>
            <person name="Jalali M."/>
            <person name="Kalush F."/>
            <person name="Karpen G.H."/>
            <person name="Ke Z."/>
            <person name="Kennison J.A."/>
            <person name="Ketchum K.A."/>
            <person name="Kimmel B.E."/>
            <person name="Kodira C.D."/>
            <person name="Kraft C.L."/>
            <person name="Kravitz S."/>
            <person name="Kulp D."/>
            <person name="Lai Z."/>
            <person name="Lasko P."/>
            <person name="Lei Y."/>
            <person name="Levitsky A.A."/>
            <person name="Li J.H."/>
            <person name="Li Z."/>
            <person name="Liang Y."/>
            <person name="Lin X."/>
            <person name="Liu X."/>
            <person name="Mattei B."/>
            <person name="McIntosh T.C."/>
            <person name="McLeod M.P."/>
            <person name="McPherson D."/>
            <person name="Merkulov G."/>
            <person name="Milshina N.V."/>
            <person name="Mobarry C."/>
            <person name="Morris J."/>
            <person name="Moshrefi A."/>
            <person name="Mount S.M."/>
            <person name="Moy M."/>
            <person name="Murphy B."/>
            <person name="Murphy L."/>
            <person name="Muzny D.M."/>
            <person name="Nelson D.L."/>
            <person name="Nelson D.R."/>
            <person name="Nelson K.A."/>
            <person name="Nixon K."/>
            <person name="Nusskern D.R."/>
            <person name="Pacleb J.M."/>
            <person name="Palazzolo M."/>
            <person name="Pittman G.S."/>
            <person name="Pan S."/>
            <person name="Pollard J."/>
            <person name="Puri V."/>
            <person name="Reese M.G."/>
            <person name="Reinert K."/>
            <person name="Remington K."/>
            <person name="Saunders R.D.C."/>
            <person name="Scheeler F."/>
            <person name="Shen H."/>
            <person name="Shue B.C."/>
            <person name="Siden-Kiamos I."/>
            <person name="Simpson M."/>
            <person name="Skupski M.P."/>
            <person name="Smith T.J."/>
            <person name="Spier E."/>
            <person name="Spradling A.C."/>
            <person name="Stapleton M."/>
            <person name="Strong R."/>
            <person name="Sun E."/>
            <person name="Svirskas R."/>
            <person name="Tector C."/>
            <person name="Turner R."/>
            <person name="Venter E."/>
            <person name="Wang A.H."/>
            <person name="Wang X."/>
            <person name="Wang Z.-Y."/>
            <person name="Wassarman D.A."/>
            <person name="Weinstock G.M."/>
            <person name="Weissenbach J."/>
            <person name="Williams S.M."/>
            <person name="Woodage T."/>
            <person name="Worley K.C."/>
            <person name="Wu D."/>
            <person name="Yang S."/>
            <person name="Yao Q.A."/>
            <person name="Ye J."/>
            <person name="Yeh R.-F."/>
            <person name="Zaveri J.S."/>
            <person name="Zhan M."/>
            <person name="Zhang G."/>
            <person name="Zhao Q."/>
            <person name="Zheng L."/>
            <person name="Zheng X.H."/>
            <person name="Zhong F.N."/>
            <person name="Zhong W."/>
            <person name="Zhou X."/>
            <person name="Zhu S.C."/>
            <person name="Zhu X."/>
            <person name="Smith H.O."/>
            <person name="Gibbs R.A."/>
            <person name="Myers E.W."/>
            <person name="Rubin G.M."/>
            <person name="Venter J.C."/>
        </authorList>
    </citation>
    <scope>NUCLEOTIDE SEQUENCE [LARGE SCALE GENOMIC DNA]</scope>
    <source>
        <strain evidence="5">Berkeley</strain>
    </source>
</reference>
<reference evidence="10" key="3">
    <citation type="journal article" date="2002" name="Genome Biol.">
        <title>Annotation of the Drosophila melanogaster euchromatic genome: a systematic review.</title>
        <authorList>
            <person name="Misra S."/>
            <person name="Crosby M.A."/>
            <person name="Mungall C.J."/>
            <person name="Matthews B.B."/>
            <person name="Campbell K.S."/>
            <person name="Hradecky P."/>
            <person name="Huang Y."/>
            <person name="Kaminker J.S."/>
            <person name="Millburn G.H."/>
            <person name="Prochnik S.E."/>
            <person name="Smith C.D."/>
            <person name="Tupy J.L."/>
            <person name="Whitfield E.J."/>
            <person name="Bayraktaroglu L."/>
            <person name="Berman B.P."/>
            <person name="Bettencourt B.R."/>
            <person name="Celniker S.E."/>
            <person name="de Grey A.D.N.J."/>
            <person name="Drysdale R.A."/>
            <person name="Harris N.L."/>
            <person name="Richter J."/>
            <person name="Russo S."/>
            <person name="Schroeder A.J."/>
            <person name="Shu S.Q."/>
            <person name="Stapleton M."/>
            <person name="Yamada C."/>
            <person name="Ashburner M."/>
            <person name="Gelbart W.M."/>
            <person name="Rubin G.M."/>
            <person name="Lewis S.E."/>
        </authorList>
    </citation>
    <scope>GENOME REANNOTATION</scope>
    <scope>ALTERNATIVE SPLICING</scope>
    <source>
        <strain>Berkeley</strain>
    </source>
</reference>
<reference key="4">
    <citation type="submission" date="2006-10" db="EMBL/GenBank/DDBJ databases">
        <authorList>
            <person name="Stapleton M."/>
            <person name="Carlson J."/>
            <person name="Frise E."/>
            <person name="Kapadia B."/>
            <person name="Park S."/>
            <person name="Wan K."/>
            <person name="Yu C."/>
            <person name="Celniker S."/>
        </authorList>
    </citation>
    <scope>NUCLEOTIDE SEQUENCE [LARGE SCALE MRNA] (ISOFORM F)</scope>
    <source>
        <strain>Berkeley</strain>
    </source>
</reference>
<reference key="5">
    <citation type="journal article" date="2012" name="Zool. Sci.">
        <title>Expression of beta-adrenergic-like octopamine receptors during Drosophila development.</title>
        <authorList>
            <person name="Ohhara Y."/>
            <person name="Kayashima Y."/>
            <person name="Hayashi Y."/>
            <person name="Kobayashi S."/>
            <person name="Yamakawa-Kobayashi K."/>
        </authorList>
    </citation>
    <scope>TISSUE SPECIFICITY</scope>
    <scope>DEVELOPMENTAL STAGE</scope>
</reference>
<reference key="6">
    <citation type="journal article" date="2015" name="Proc. Natl. Acad. Sci. U.S.A.">
        <title>Autocrine regulation of ecdysone synthesis by beta3-octopamine receptor in the prothoracic gland is essential for Drosophila metamorphosis.</title>
        <authorList>
            <person name="Ohhara Y."/>
            <person name="Shimada-Niwa Y."/>
            <person name="Niwa R."/>
            <person name="Kayashima Y."/>
            <person name="Hayashi Y."/>
            <person name="Akagi K."/>
            <person name="Ueda H."/>
            <person name="Yamakawa-Kobayashi K."/>
            <person name="Kobayashi S."/>
        </authorList>
    </citation>
    <scope>FUNCTION</scope>
    <scope>DISRUPTION PHENOTYPE</scope>
</reference>
<gene>
    <name evidence="12" type="primary">Octbeta3R</name>
    <name type="synonym">Oct-beta-3</name>
    <name evidence="12" type="ORF">CG42244</name>
</gene>
<name>OCTB3_DROME</name>
<evidence type="ECO:0000250" key="1">
    <source>
        <dbReference type="UniProtKB" id="Q9VCZ3"/>
    </source>
</evidence>
<evidence type="ECO:0000255" key="2"/>
<evidence type="ECO:0000255" key="3">
    <source>
        <dbReference type="PROSITE-ProRule" id="PRU00521"/>
    </source>
</evidence>
<evidence type="ECO:0000256" key="4">
    <source>
        <dbReference type="SAM" id="MobiDB-lite"/>
    </source>
</evidence>
<evidence type="ECO:0000269" key="5">
    <source>
    </source>
</evidence>
<evidence type="ECO:0000269" key="6">
    <source>
    </source>
</evidence>
<evidence type="ECO:0000269" key="7">
    <source>
    </source>
</evidence>
<evidence type="ECO:0000269" key="8">
    <source>
    </source>
</evidence>
<evidence type="ECO:0000303" key="9">
    <source>
    </source>
</evidence>
<evidence type="ECO:0000305" key="10"/>
<evidence type="ECO:0000312" key="11">
    <source>
        <dbReference type="EMBL" id="CAI56424.1"/>
    </source>
</evidence>
<evidence type="ECO:0000312" key="12">
    <source>
        <dbReference type="FlyBase" id="FBgn0250910"/>
    </source>
</evidence>
<feature type="chain" id="PRO_0000069961" description="Octopamine receptor beta-3R">
    <location>
        <begin position="1"/>
        <end position="1256"/>
    </location>
</feature>
<feature type="topological domain" description="Extracellular" evidence="2">
    <location>
        <begin position="1"/>
        <end position="143"/>
    </location>
</feature>
<feature type="transmembrane region" description="Helical; Name=1" evidence="2">
    <location>
        <begin position="144"/>
        <end position="164"/>
    </location>
</feature>
<feature type="topological domain" description="Cytoplasmic" evidence="2">
    <location>
        <begin position="165"/>
        <end position="171"/>
    </location>
</feature>
<feature type="transmembrane region" description="Helical; Name=2" evidence="2">
    <location>
        <begin position="172"/>
        <end position="192"/>
    </location>
</feature>
<feature type="topological domain" description="Extracellular" evidence="2">
    <location>
        <begin position="193"/>
        <end position="213"/>
    </location>
</feature>
<feature type="transmembrane region" description="Helical; Name=3" evidence="2">
    <location>
        <begin position="214"/>
        <end position="236"/>
    </location>
</feature>
<feature type="topological domain" description="Cytoplasmic" evidence="2">
    <location>
        <begin position="237"/>
        <end position="258"/>
    </location>
</feature>
<feature type="transmembrane region" description="Helical; Name=4" evidence="2">
    <location>
        <begin position="259"/>
        <end position="279"/>
    </location>
</feature>
<feature type="topological domain" description="Extracellular" evidence="2">
    <location>
        <begin position="280"/>
        <end position="305"/>
    </location>
</feature>
<feature type="transmembrane region" description="Helical; Name=5" evidence="2">
    <location>
        <begin position="306"/>
        <end position="326"/>
    </location>
</feature>
<feature type="topological domain" description="Cytoplasmic" evidence="2">
    <location>
        <begin position="327"/>
        <end position="1169"/>
    </location>
</feature>
<feature type="transmembrane region" description="Helical; Name=7" evidence="2">
    <location>
        <begin position="1170"/>
        <end position="1190"/>
    </location>
</feature>
<feature type="topological domain" description="Extracellular" evidence="2">
    <location>
        <begin position="1191"/>
        <end position="1202"/>
    </location>
</feature>
<feature type="transmembrane region" description="Helical; Name=8" evidence="2">
    <location>
        <begin position="1203"/>
        <end position="1223"/>
    </location>
</feature>
<feature type="topological domain" description="Cytoplasmic" evidence="2">
    <location>
        <begin position="1224"/>
        <end position="1256"/>
    </location>
</feature>
<feature type="region of interest" description="Disordered" evidence="4">
    <location>
        <begin position="377"/>
        <end position="427"/>
    </location>
</feature>
<feature type="region of interest" description="Disordered" evidence="4">
    <location>
        <begin position="480"/>
        <end position="512"/>
    </location>
</feature>
<feature type="region of interest" description="Disordered" evidence="4">
    <location>
        <begin position="665"/>
        <end position="698"/>
    </location>
</feature>
<feature type="region of interest" description="Disordered" evidence="4">
    <location>
        <begin position="751"/>
        <end position="774"/>
    </location>
</feature>
<feature type="region of interest" description="Disordered" evidence="4">
    <location>
        <begin position="1087"/>
        <end position="1117"/>
    </location>
</feature>
<feature type="compositionally biased region" description="Acidic residues" evidence="4">
    <location>
        <begin position="396"/>
        <end position="406"/>
    </location>
</feature>
<feature type="compositionally biased region" description="Polar residues" evidence="4">
    <location>
        <begin position="489"/>
        <end position="498"/>
    </location>
</feature>
<feature type="compositionally biased region" description="Pro residues" evidence="4">
    <location>
        <begin position="757"/>
        <end position="770"/>
    </location>
</feature>
<feature type="glycosylation site" description="N-linked (GlcNAc...) asparagine" evidence="2">
    <location>
        <position position="36"/>
    </location>
</feature>
<feature type="glycosylation site" description="N-linked (GlcNAc...) asparagine" evidence="2">
    <location>
        <position position="113"/>
    </location>
</feature>
<feature type="glycosylation site" description="N-linked (GlcNAc...) asparagine" evidence="2">
    <location>
        <position position="117"/>
    </location>
</feature>
<feature type="glycosylation site" description="N-linked (GlcNAc...) asparagine" evidence="2">
    <location>
        <position position="196"/>
    </location>
</feature>
<feature type="splice variant" id="VSP_051835" description="In isoform A." evidence="9">
    <location>
        <begin position="262"/>
        <end position="1166"/>
    </location>
</feature>
<feature type="splice variant" id="VSP_051837" description="In isoform C." evidence="9">
    <location>
        <begin position="331"/>
        <end position="1256"/>
    </location>
</feature>
<feature type="splice variant" id="VSP_041777" description="In isoform D." evidence="9">
    <location>
        <begin position="351"/>
        <end position="1166"/>
    </location>
</feature>
<feature type="splice variant" id="VSP_041778" description="In isoform J." evidence="10">
    <location>
        <begin position="351"/>
        <end position="1161"/>
    </location>
</feature>
<feature type="splice variant" id="VSP_041779" description="In isoform B." evidence="9">
    <original>DMLQPATDEDDDRDECDELRVPSPPPRRLSRSSIDLRDLEQERYEKVTHTDSAPSMMALQQQQPSHN</original>
    <variation>AVPCDRPKDGRPNTRPPAPWASSWASFCSAGCPSFCGMSSHRSAVRPAHVPMCSWWCYSGSVTSTPR</variation>
    <location>
        <begin position="390"/>
        <end position="456"/>
    </location>
</feature>
<feature type="splice variant" id="VSP_041780" description="In isoform H." evidence="10">
    <original>DMLQPA</original>
    <variation>VSLEGY</variation>
    <location>
        <begin position="390"/>
        <end position="395"/>
    </location>
</feature>
<feature type="splice variant" id="VSP_041781" description="In isoform H." evidence="10">
    <location>
        <begin position="396"/>
        <end position="1256"/>
    </location>
</feature>
<feature type="splice variant" id="VSP_041782" description="In isoform B." evidence="9">
    <location>
        <begin position="457"/>
        <end position="1256"/>
    </location>
</feature>
<feature type="splice variant" id="VSP_041783" description="In isoform G." evidence="10">
    <original>KHEFSNKSSLIRRGGICIFVDEEEAEIIEQRPRGITFAAVPSPLPKCPLCGADISSTTGTTANATATANADSTIDTTVTTSSKRSIHEQTPDLGQRPASSSSSTRFWHKRTAAVTACWQQSKNRKRRFKTGCSHCGATG</original>
    <variation>S</variation>
    <location>
        <begin position="1013"/>
        <end position="1151"/>
    </location>
</feature>
<feature type="sequence conflict" description="In Ref. 1; CAI56425." evidence="10" ref="1">
    <original>T</original>
    <variation>A</variation>
    <location>
        <position position="12"/>
    </location>
</feature>
<feature type="sequence conflict" description="In Ref. 1; CAI56426." evidence="10" ref="1">
    <original>L</original>
    <variation>S</variation>
    <location>
        <position position="98"/>
    </location>
</feature>
<feature type="sequence conflict" description="In Ref. 1; CAI56424/CAI56425/CAI56426/CAI56427." evidence="10" ref="1">
    <original>A</original>
    <variation>T</variation>
    <location>
        <position position="122"/>
    </location>
</feature>
<feature type="sequence conflict" description="In Ref. 1; CAI56426." evidence="10" ref="1">
    <original>S</original>
    <variation>G</variation>
    <location>
        <position position="132"/>
    </location>
</feature>
<feature type="sequence conflict" description="In Ref. 1; CAI56426." evidence="10" ref="1">
    <original>F</original>
    <variation>L</variation>
    <location>
        <position position="211"/>
    </location>
</feature>
<feature type="sequence conflict" description="In Ref. 1; CAI56425." evidence="10" ref="1">
    <original>F</original>
    <variation>P</variation>
    <location>
        <position position="211"/>
    </location>
</feature>
<feature type="sequence conflict" description="In Ref. 1; CAI56427." evidence="10" ref="1">
    <original>A</original>
    <variation>TSSA</variation>
    <location>
        <position position="262"/>
    </location>
</feature>
<feature type="sequence conflict" description="In Ref. 4; ABK30906." evidence="10" ref="4">
    <original>V</original>
    <variation>L</variation>
    <location>
        <position position="320"/>
    </location>
</feature>
<feature type="sequence conflict" description="In Ref. 4; ABK30906." evidence="10" ref="4">
    <original>K</original>
    <variation>R</variation>
    <location>
        <position position="679"/>
    </location>
</feature>
<feature type="sequence conflict" description="In Ref. 4; ABK30906." evidence="10" ref="4">
    <original>Y</original>
    <variation>C</variation>
    <location>
        <position position="852"/>
    </location>
</feature>
<feature type="sequence conflict" description="In Ref. 1; CAI56427." evidence="10" ref="1">
    <original>L</original>
    <variation>M</variation>
    <location>
        <position position="1186"/>
    </location>
</feature>
<proteinExistence type="evidence at transcript level"/>
<keyword id="KW-0025">Alternative splicing</keyword>
<keyword id="KW-1003">Cell membrane</keyword>
<keyword id="KW-0297">G-protein coupled receptor</keyword>
<keyword id="KW-0325">Glycoprotein</keyword>
<keyword id="KW-0472">Membrane</keyword>
<keyword id="KW-0675">Receptor</keyword>
<keyword id="KW-1185">Reference proteome</keyword>
<keyword id="KW-0807">Transducer</keyword>
<keyword id="KW-0812">Transmembrane</keyword>
<keyword id="KW-1133">Transmembrane helix</keyword>
<organism>
    <name type="scientific">Drosophila melanogaster</name>
    <name type="common">Fruit fly</name>
    <dbReference type="NCBI Taxonomy" id="7227"/>
    <lineage>
        <taxon>Eukaryota</taxon>
        <taxon>Metazoa</taxon>
        <taxon>Ecdysozoa</taxon>
        <taxon>Arthropoda</taxon>
        <taxon>Hexapoda</taxon>
        <taxon>Insecta</taxon>
        <taxon>Pterygota</taxon>
        <taxon>Neoptera</taxon>
        <taxon>Endopterygota</taxon>
        <taxon>Diptera</taxon>
        <taxon>Brachycera</taxon>
        <taxon>Muscomorpha</taxon>
        <taxon>Ephydroidea</taxon>
        <taxon>Drosophilidae</taxon>
        <taxon>Drosophila</taxon>
        <taxon>Sophophora</taxon>
    </lineage>
</organism>
<sequence>MSGVNVADLLATTMTLPITAAAGAATSQAAATSATNASHLQPATLTGHISTTAAAKTTTTPTSSLPITSQFVDASLTSLSLTATSSDASYSSPFSSYLSSDSTFELLSTVGPNITANGSDIAVDNQAELEESWLDLSLLLLKGFIFSSIILAAVLGNALVIISVQRNRKLRVITNYFVVSLAMADMLVALCAMTFNASVELSGGKWMFGPFMCNVYNSLDVYFSTASILHLCCISVDRYYAIVRPLEYPLNMTHKTVCFMLANVWILPALISFTPIFLGWYTTEEHLREISLHPDQCSFVVNKAYALISSSVSFWIPGIVMLVMYWRIFKEAIRQRKALSRTSSNILLNSVHMGHTQQPTSLSYLHPSDCDLNATSAREETHSALSNLEDMLQPATDEDDDRDECDELRVPSPPPRRLSRSSIDLRDLEQERYEKVTHTDSAPSMMALQQQQPSHNQLQPPAPVFNPQIWTEGKMIPSKELDKEHSHPNGPQQQLSLTSGSGNSEPEPESTAYRVFGGLNSDESEGNDLYDTHLPLAEDNKELKRLIEDNYLYFKRQTGGTIISGPGGGKYAALSETDFIRLKAGAAACGRKAFASSDSEFLRTISESRALPEQPVPGKEKGFNILSLLSKTKRSSTECFTLEKKRHQANSEGSSFFRRSRNRKLSHSYNGCGGGKERKLERRQRQHSDTDSTPNKPDILLDINVLSEQSGASVIQQFSDGVQLIDFSELKTPPERIRSDDELAQLADCFGESPQQPATPPPSLSPPELPEPSGLLIASSSELAEIFRSLSFPLGRPAGAPQRLSTLSDQVCANYLMSPPNTPAPPAISVPNGGAMDSSASSNAQSASINVYFLSPPPHAAAPGYTPSDTSTVSLDVVTSLPMPVPVPQPNPQMASQSNISPKPEIILDSTLSPVEGCGDEHRDVTSPLFKRKDSAGDADVSVSGNGGAGGVGGVGGRQGRCSILAGYDGIQTVRKRQASVVTYDVNVINFSQENSDSRSYIPMGRVSTSSAKHEFSNKSSLIRRGGICIFVDEEEAEIIEQRPRGITFAAVPSPLPKCPLCGADISSTTGTTANATATANADSTIDTTVTTSSKRSIHEQTPDLGQRPASSSSSTRFWHKRTAAVTACWQQSKNRKRRFKTGCSHCGATGGSVRPAKGWKAEHKAARTLGIIMGVFLLCWLPFFLWYVITSLCGPACPCPDVLVVVLFWIGYFNSTLNPLIYAYFNRDFREAFRNTLECVLPCLEKRNPYNAYYV</sequence>
<protein>
    <recommendedName>
        <fullName>Octopamine receptor beta-3R</fullName>
        <shortName>DmOct-beta-3R</shortName>
    </recommendedName>
</protein>
<accession>Q4LBB6</accession>
<accession>A0AVV1</accession>
<accession>Q2PDR1</accession>
<accession>Q2PDR2</accession>
<accession>Q2PDR3</accession>
<accession>Q2PDR4</accession>
<accession>Q2PDR5</accession>
<accession>Q2PDR6</accession>
<accession>Q4LBB5</accession>
<accession>Q4LBB7</accession>
<accession>Q4LBB8</accession>
<accession>Q8INI6</accession>
<accession>Q8INI7</accession>
<accession>Q9VG56</accession>
<accession>Q9VG57</accession>